<dbReference type="EMBL" id="AABL01001515">
    <property type="protein sequence ID" value="EAA16837.1"/>
    <property type="molecule type" value="Genomic_DNA"/>
</dbReference>
<dbReference type="EMBL" id="AF124820">
    <property type="protein sequence ID" value="AAD28740.1"/>
    <property type="molecule type" value="Genomic_DNA"/>
</dbReference>
<dbReference type="SMR" id="Q9XYU2"/>
<dbReference type="FunCoup" id="Q9XYU2">
    <property type="interactions" value="318"/>
</dbReference>
<dbReference type="STRING" id="73239.Q9XYU2"/>
<dbReference type="PaxDb" id="73239-Q9XYU2"/>
<dbReference type="EnsemblProtists" id="EAA16837">
    <property type="protein sequence ID" value="EAA16837"/>
    <property type="gene ID" value="EAA16837"/>
</dbReference>
<dbReference type="KEGG" id="pyo:PY17X_1111700"/>
<dbReference type="VEuPathDB" id="PlasmoDB:Py17XNL_001105524"/>
<dbReference type="InParanoid" id="Q9XYU2"/>
<dbReference type="Proteomes" id="UP000008553">
    <property type="component" value="Unassembled WGS sequence"/>
</dbReference>
<dbReference type="GO" id="GO:0005737">
    <property type="term" value="C:cytoplasm"/>
    <property type="evidence" value="ECO:0007669"/>
    <property type="project" value="UniProtKB-SubCell"/>
</dbReference>
<dbReference type="GO" id="GO:0005509">
    <property type="term" value="F:calcium ion binding"/>
    <property type="evidence" value="ECO:0007669"/>
    <property type="project" value="TreeGrafter"/>
</dbReference>
<dbReference type="Gene3D" id="2.170.150.10">
    <property type="entry name" value="Metal Binding Protein, Guanine Nucleotide Exchange Factor, Chain A"/>
    <property type="match status" value="1"/>
</dbReference>
<dbReference type="InterPro" id="IPR011057">
    <property type="entry name" value="Mss4-like_sf"/>
</dbReference>
<dbReference type="InterPro" id="IPR011323">
    <property type="entry name" value="Mss4/transl-control_tumour"/>
</dbReference>
<dbReference type="InterPro" id="IPR034737">
    <property type="entry name" value="TCTP"/>
</dbReference>
<dbReference type="InterPro" id="IPR018103">
    <property type="entry name" value="Translation_control_tumour_CS"/>
</dbReference>
<dbReference type="InterPro" id="IPR018105">
    <property type="entry name" value="Translational_control_tumour_p"/>
</dbReference>
<dbReference type="PANTHER" id="PTHR11991">
    <property type="entry name" value="TRANSLATIONALLY CONTROLLED TUMOR PROTEIN-RELATED"/>
    <property type="match status" value="1"/>
</dbReference>
<dbReference type="PANTHER" id="PTHR11991:SF0">
    <property type="entry name" value="TRANSLATIONALLY-CONTROLLED TUMOR PROTEIN"/>
    <property type="match status" value="1"/>
</dbReference>
<dbReference type="Pfam" id="PF00838">
    <property type="entry name" value="TCTP"/>
    <property type="match status" value="1"/>
</dbReference>
<dbReference type="PRINTS" id="PR01653">
    <property type="entry name" value="TCTPROTEIN"/>
</dbReference>
<dbReference type="SUPFAM" id="SSF51316">
    <property type="entry name" value="Mss4-like"/>
    <property type="match status" value="1"/>
</dbReference>
<dbReference type="PROSITE" id="PS01003">
    <property type="entry name" value="TCTP_2"/>
    <property type="match status" value="1"/>
</dbReference>
<dbReference type="PROSITE" id="PS51797">
    <property type="entry name" value="TCTP_3"/>
    <property type="match status" value="1"/>
</dbReference>
<comment type="function">
    <text evidence="1">Involved in calcium binding and microtubule stabilization.</text>
</comment>
<comment type="subcellular location">
    <subcellularLocation>
        <location evidence="1">Cytoplasm</location>
    </subcellularLocation>
</comment>
<comment type="miscellaneous">
    <text>Seems to be one of the target of artemisinin.</text>
</comment>
<comment type="similarity">
    <text evidence="2">Belongs to the TCTP family.</text>
</comment>
<keyword id="KW-0106">Calcium</keyword>
<keyword id="KW-0963">Cytoplasm</keyword>
<keyword id="KW-1185">Reference proteome</keyword>
<gene>
    <name type="primary">TCTP</name>
    <name type="ORF">PY04896</name>
</gene>
<feature type="chain" id="PRO_0000211293" description="Translationally-controlled tumor protein homolog">
    <location>
        <begin position="1"/>
        <end position="171"/>
    </location>
</feature>
<feature type="domain" description="TCTP" evidence="2">
    <location>
        <begin position="1"/>
        <end position="171"/>
    </location>
</feature>
<feature type="sequence conflict" description="In Ref. 2; AAD28740." evidence="3" ref="2">
    <original>P</original>
    <variation>A</variation>
    <location>
        <position position="27"/>
    </location>
</feature>
<organism>
    <name type="scientific">Plasmodium yoelii yoelii</name>
    <dbReference type="NCBI Taxonomy" id="73239"/>
    <lineage>
        <taxon>Eukaryota</taxon>
        <taxon>Sar</taxon>
        <taxon>Alveolata</taxon>
        <taxon>Apicomplexa</taxon>
        <taxon>Aconoidasida</taxon>
        <taxon>Haemosporida</taxon>
        <taxon>Plasmodiidae</taxon>
        <taxon>Plasmodium</taxon>
        <taxon>Plasmodium (Vinckeia)</taxon>
    </lineage>
</organism>
<name>TCTP_PLAYO</name>
<sequence>MKVYKDIFTNDEVCSDSYIQEDPFGNPEFREIAFEVKSNKRIKGNDDYGIADNSEDAVDGMGADVEHVIDIVDSFQLTSTSLSKKEYSAYVKNFMQRILKHLEEKKPDRVDIFKTKAQPLIKHILTNFDDFEFYMGESLDMEAGLIYSYYKGEEITPRFVYISDGLFEEKY</sequence>
<protein>
    <recommendedName>
        <fullName>Translationally-controlled tumor protein homolog</fullName>
        <shortName>TCTP</shortName>
    </recommendedName>
</protein>
<reference key="1">
    <citation type="journal article" date="2002" name="Nature">
        <title>Genome sequence and comparative analysis of the model rodent malaria parasite Plasmodium yoelii yoelii.</title>
        <authorList>
            <person name="Carlton J.M."/>
            <person name="Angiuoli S.V."/>
            <person name="Suh B.B."/>
            <person name="Kooij T.W."/>
            <person name="Pertea M."/>
            <person name="Silva J.C."/>
            <person name="Ermolaeva M.D."/>
            <person name="Allen J.E."/>
            <person name="Selengut J.D."/>
            <person name="Koo H.L."/>
            <person name="Peterson J.D."/>
            <person name="Pop M."/>
            <person name="Kosack D.S."/>
            <person name="Shumway M.F."/>
            <person name="Bidwell S.L."/>
            <person name="Shallom S.J."/>
            <person name="van Aken S.E."/>
            <person name="Riedmuller S.B."/>
            <person name="Feldblyum T.V."/>
            <person name="Cho J.K."/>
            <person name="Quackenbush J."/>
            <person name="Sedegah M."/>
            <person name="Shoaibi A."/>
            <person name="Cummings L.M."/>
            <person name="Florens L."/>
            <person name="Yates J.R. III"/>
            <person name="Raine J.D."/>
            <person name="Sinden R.E."/>
            <person name="Harris M.A."/>
            <person name="Cunningham D.A."/>
            <person name="Preiser P.R."/>
            <person name="Bergman L.W."/>
            <person name="Vaidya A.B."/>
            <person name="van Lin L.H."/>
            <person name="Janse C.J."/>
            <person name="Waters A.P."/>
            <person name="Smith H.O."/>
            <person name="White O.R."/>
            <person name="Salzberg S.L."/>
            <person name="Venter J.C."/>
            <person name="Fraser C.M."/>
            <person name="Hoffman S.L."/>
            <person name="Gardner M.J."/>
            <person name="Carucci D.J."/>
        </authorList>
    </citation>
    <scope>NUCLEOTIDE SEQUENCE [LARGE SCALE GENOMIC DNA]</scope>
    <source>
        <strain>17XNL</strain>
    </source>
</reference>
<reference key="2">
    <citation type="journal article" date="2000" name="Antimicrob. Agents Chemother.">
        <title>Mechanisms of artemisinin resistance in the rodent malaria pathogen Plasmodium yoelii.</title>
        <authorList>
            <person name="Walker D.J."/>
            <person name="Pitsch J.L."/>
            <person name="Peng M.M."/>
            <person name="Robinson B.L."/>
            <person name="Peters W."/>
            <person name="Bhisutthibhan J."/>
            <person name="Meshnick S.R."/>
        </authorList>
    </citation>
    <scope>NUCLEOTIDE SEQUENCE [GENOMIC DNA] OF 10-163</scope>
</reference>
<evidence type="ECO:0000250" key="1"/>
<evidence type="ECO:0000255" key="2">
    <source>
        <dbReference type="PROSITE-ProRule" id="PRU01133"/>
    </source>
</evidence>
<evidence type="ECO:0000305" key="3"/>
<proteinExistence type="inferred from homology"/>
<accession>Q9XYU2</accession>
<accession>Q7RF15</accession>